<name>UPPP_STAHJ</name>
<reference key="1">
    <citation type="journal article" date="2005" name="J. Bacteriol.">
        <title>Whole-genome sequencing of Staphylococcus haemolyticus uncovers the extreme plasticity of its genome and the evolution of human-colonizing staphylococcal species.</title>
        <authorList>
            <person name="Takeuchi F."/>
            <person name="Watanabe S."/>
            <person name="Baba T."/>
            <person name="Yuzawa H."/>
            <person name="Ito T."/>
            <person name="Morimoto Y."/>
            <person name="Kuroda M."/>
            <person name="Cui L."/>
            <person name="Takahashi M."/>
            <person name="Ankai A."/>
            <person name="Baba S."/>
            <person name="Fukui S."/>
            <person name="Lee J.C."/>
            <person name="Hiramatsu K."/>
        </authorList>
    </citation>
    <scope>NUCLEOTIDE SEQUENCE [LARGE SCALE GENOMIC DNA]</scope>
    <source>
        <strain>JCSC1435</strain>
    </source>
</reference>
<evidence type="ECO:0000255" key="1">
    <source>
        <dbReference type="HAMAP-Rule" id="MF_01006"/>
    </source>
</evidence>
<feature type="chain" id="PRO_0000227640" description="Undecaprenyl-diphosphatase">
    <location>
        <begin position="1"/>
        <end position="291"/>
    </location>
</feature>
<feature type="transmembrane region" description="Helical" evidence="1">
    <location>
        <begin position="1"/>
        <end position="21"/>
    </location>
</feature>
<feature type="transmembrane region" description="Helical" evidence="1">
    <location>
        <begin position="48"/>
        <end position="68"/>
    </location>
</feature>
<feature type="transmembrane region" description="Helical" evidence="1">
    <location>
        <begin position="100"/>
        <end position="120"/>
    </location>
</feature>
<feature type="transmembrane region" description="Helical" evidence="1">
    <location>
        <begin position="124"/>
        <end position="144"/>
    </location>
</feature>
<feature type="transmembrane region" description="Helical" evidence="1">
    <location>
        <begin position="160"/>
        <end position="180"/>
    </location>
</feature>
<feature type="transmembrane region" description="Helical" evidence="1">
    <location>
        <begin position="201"/>
        <end position="221"/>
    </location>
</feature>
<feature type="transmembrane region" description="Helical" evidence="1">
    <location>
        <begin position="230"/>
        <end position="250"/>
    </location>
</feature>
<feature type="transmembrane region" description="Helical" evidence="1">
    <location>
        <begin position="270"/>
        <end position="290"/>
    </location>
</feature>
<protein>
    <recommendedName>
        <fullName evidence="1">Undecaprenyl-diphosphatase</fullName>
        <ecNumber evidence="1">3.6.1.27</ecNumber>
    </recommendedName>
    <alternativeName>
        <fullName evidence="1">Bacitracin resistance protein</fullName>
    </alternativeName>
    <alternativeName>
        <fullName evidence="1">Undecaprenyl pyrophosphate phosphatase</fullName>
    </alternativeName>
</protein>
<keyword id="KW-0046">Antibiotic resistance</keyword>
<keyword id="KW-1003">Cell membrane</keyword>
<keyword id="KW-0133">Cell shape</keyword>
<keyword id="KW-0961">Cell wall biogenesis/degradation</keyword>
<keyword id="KW-0378">Hydrolase</keyword>
<keyword id="KW-0472">Membrane</keyword>
<keyword id="KW-0573">Peptidoglycan synthesis</keyword>
<keyword id="KW-0812">Transmembrane</keyword>
<keyword id="KW-1133">Transmembrane helix</keyword>
<dbReference type="EC" id="3.6.1.27" evidence="1"/>
<dbReference type="EMBL" id="AP006716">
    <property type="protein sequence ID" value="BAE05519.1"/>
    <property type="molecule type" value="Genomic_DNA"/>
</dbReference>
<dbReference type="RefSeq" id="WP_011276470.1">
    <property type="nucleotide sequence ID" value="NC_007168.1"/>
</dbReference>
<dbReference type="SMR" id="Q4L4A6"/>
<dbReference type="KEGG" id="sha:SH2210"/>
<dbReference type="eggNOG" id="COG1968">
    <property type="taxonomic scope" value="Bacteria"/>
</dbReference>
<dbReference type="HOGENOM" id="CLU_060296_2_0_9"/>
<dbReference type="OrthoDB" id="9808289at2"/>
<dbReference type="Proteomes" id="UP000000543">
    <property type="component" value="Chromosome"/>
</dbReference>
<dbReference type="GO" id="GO:0005886">
    <property type="term" value="C:plasma membrane"/>
    <property type="evidence" value="ECO:0007669"/>
    <property type="project" value="UniProtKB-SubCell"/>
</dbReference>
<dbReference type="GO" id="GO:0050380">
    <property type="term" value="F:undecaprenyl-diphosphatase activity"/>
    <property type="evidence" value="ECO:0007669"/>
    <property type="project" value="UniProtKB-UniRule"/>
</dbReference>
<dbReference type="GO" id="GO:0071555">
    <property type="term" value="P:cell wall organization"/>
    <property type="evidence" value="ECO:0007669"/>
    <property type="project" value="UniProtKB-KW"/>
</dbReference>
<dbReference type="GO" id="GO:0009252">
    <property type="term" value="P:peptidoglycan biosynthetic process"/>
    <property type="evidence" value="ECO:0007669"/>
    <property type="project" value="UniProtKB-KW"/>
</dbReference>
<dbReference type="GO" id="GO:0008360">
    <property type="term" value="P:regulation of cell shape"/>
    <property type="evidence" value="ECO:0007669"/>
    <property type="project" value="UniProtKB-KW"/>
</dbReference>
<dbReference type="GO" id="GO:0046677">
    <property type="term" value="P:response to antibiotic"/>
    <property type="evidence" value="ECO:0007669"/>
    <property type="project" value="UniProtKB-UniRule"/>
</dbReference>
<dbReference type="HAMAP" id="MF_01006">
    <property type="entry name" value="Undec_diphosphatase"/>
    <property type="match status" value="1"/>
</dbReference>
<dbReference type="InterPro" id="IPR003824">
    <property type="entry name" value="UppP"/>
</dbReference>
<dbReference type="NCBIfam" id="NF001390">
    <property type="entry name" value="PRK00281.1-4"/>
    <property type="match status" value="1"/>
</dbReference>
<dbReference type="NCBIfam" id="TIGR00753">
    <property type="entry name" value="undec_PP_bacA"/>
    <property type="match status" value="1"/>
</dbReference>
<dbReference type="PANTHER" id="PTHR30622">
    <property type="entry name" value="UNDECAPRENYL-DIPHOSPHATASE"/>
    <property type="match status" value="1"/>
</dbReference>
<dbReference type="PANTHER" id="PTHR30622:SF3">
    <property type="entry name" value="UNDECAPRENYL-DIPHOSPHATASE"/>
    <property type="match status" value="1"/>
</dbReference>
<dbReference type="Pfam" id="PF02673">
    <property type="entry name" value="BacA"/>
    <property type="match status" value="1"/>
</dbReference>
<organism>
    <name type="scientific">Staphylococcus haemolyticus (strain JCSC1435)</name>
    <dbReference type="NCBI Taxonomy" id="279808"/>
    <lineage>
        <taxon>Bacteria</taxon>
        <taxon>Bacillati</taxon>
        <taxon>Bacillota</taxon>
        <taxon>Bacilli</taxon>
        <taxon>Bacillales</taxon>
        <taxon>Staphylococcaceae</taxon>
        <taxon>Staphylococcus</taxon>
    </lineage>
</organism>
<proteinExistence type="inferred from homology"/>
<gene>
    <name evidence="1" type="primary">uppP</name>
    <name type="synonym">bacA</name>
    <name type="ordered locus">SH2210</name>
</gene>
<sequence length="291" mass="32304">MIIIEFIKGLILGIVEGLTEFAPVSSTGHMILVDDMWLKSTEFLGPHSAFTFKVVIQLGSVFAAAWVFRERYFEMLHIGKYRNSSINEEFRSKPRRLNLLHVLVGMIPAGILGVLFDDFIEAHLFSVPTVMIGLFLGAIYMIIADKYSKKVQNPKSVDQINYVQAFVIGISQAVAMWPGFSRSGSTISTGVLMKLDHKSASDFTFIMAVPIMLAASALSLVKNYQYIELAHIPFYLIGFLAAFIVGLIAIKTFLHLINKVKLVPFAIYRIVLVIIIAILYFGFGIGQGISG</sequence>
<accession>Q4L4A6</accession>
<comment type="function">
    <text evidence="1">Catalyzes the dephosphorylation of undecaprenyl diphosphate (UPP). Confers resistance to bacitracin.</text>
</comment>
<comment type="catalytic activity">
    <reaction evidence="1">
        <text>di-trans,octa-cis-undecaprenyl diphosphate + H2O = di-trans,octa-cis-undecaprenyl phosphate + phosphate + H(+)</text>
        <dbReference type="Rhea" id="RHEA:28094"/>
        <dbReference type="ChEBI" id="CHEBI:15377"/>
        <dbReference type="ChEBI" id="CHEBI:15378"/>
        <dbReference type="ChEBI" id="CHEBI:43474"/>
        <dbReference type="ChEBI" id="CHEBI:58405"/>
        <dbReference type="ChEBI" id="CHEBI:60392"/>
        <dbReference type="EC" id="3.6.1.27"/>
    </reaction>
</comment>
<comment type="subcellular location">
    <subcellularLocation>
        <location evidence="1">Cell membrane</location>
        <topology evidence="1">Multi-pass membrane protein</topology>
    </subcellularLocation>
</comment>
<comment type="miscellaneous">
    <text>Bacitracin is thought to be involved in the inhibition of peptidoglycan synthesis by sequestering undecaprenyl diphosphate, thereby reducing the pool of lipid carrier available.</text>
</comment>
<comment type="similarity">
    <text evidence="1">Belongs to the UppP family.</text>
</comment>